<organism>
    <name type="scientific">Streptococcus pyogenes serotype M6 (strain ATCC BAA-946 / MGAS10394)</name>
    <dbReference type="NCBI Taxonomy" id="286636"/>
    <lineage>
        <taxon>Bacteria</taxon>
        <taxon>Bacillati</taxon>
        <taxon>Bacillota</taxon>
        <taxon>Bacilli</taxon>
        <taxon>Lactobacillales</taxon>
        <taxon>Streptococcaceae</taxon>
        <taxon>Streptococcus</taxon>
    </lineage>
</organism>
<accession>Q5XA10</accession>
<feature type="chain" id="PRO_0000138237" description="CTP synthase">
    <location>
        <begin position="1"/>
        <end position="534"/>
    </location>
</feature>
<feature type="domain" description="Glutamine amidotransferase type-1" evidence="1">
    <location>
        <begin position="292"/>
        <end position="534"/>
    </location>
</feature>
<feature type="region of interest" description="Amidoligase domain" evidence="1">
    <location>
        <begin position="1"/>
        <end position="267"/>
    </location>
</feature>
<feature type="active site" description="Nucleophile; for glutamine hydrolysis" evidence="1">
    <location>
        <position position="381"/>
    </location>
</feature>
<feature type="active site" evidence="1">
    <location>
        <position position="508"/>
    </location>
</feature>
<feature type="active site" evidence="1">
    <location>
        <position position="510"/>
    </location>
</feature>
<feature type="binding site" evidence="1">
    <location>
        <position position="13"/>
    </location>
    <ligand>
        <name>CTP</name>
        <dbReference type="ChEBI" id="CHEBI:37563"/>
        <note>allosteric inhibitor</note>
    </ligand>
</feature>
<feature type="binding site" evidence="1">
    <location>
        <position position="13"/>
    </location>
    <ligand>
        <name>UTP</name>
        <dbReference type="ChEBI" id="CHEBI:46398"/>
    </ligand>
</feature>
<feature type="binding site" evidence="1">
    <location>
        <begin position="14"/>
        <end position="19"/>
    </location>
    <ligand>
        <name>ATP</name>
        <dbReference type="ChEBI" id="CHEBI:30616"/>
    </ligand>
</feature>
<feature type="binding site" evidence="1">
    <location>
        <position position="54"/>
    </location>
    <ligand>
        <name>L-glutamine</name>
        <dbReference type="ChEBI" id="CHEBI:58359"/>
    </ligand>
</feature>
<feature type="binding site" evidence="1">
    <location>
        <position position="71"/>
    </location>
    <ligand>
        <name>ATP</name>
        <dbReference type="ChEBI" id="CHEBI:30616"/>
    </ligand>
</feature>
<feature type="binding site" evidence="1">
    <location>
        <position position="71"/>
    </location>
    <ligand>
        <name>Mg(2+)</name>
        <dbReference type="ChEBI" id="CHEBI:18420"/>
    </ligand>
</feature>
<feature type="binding site" evidence="1">
    <location>
        <position position="141"/>
    </location>
    <ligand>
        <name>Mg(2+)</name>
        <dbReference type="ChEBI" id="CHEBI:18420"/>
    </ligand>
</feature>
<feature type="binding site" evidence="1">
    <location>
        <begin position="148"/>
        <end position="150"/>
    </location>
    <ligand>
        <name>CTP</name>
        <dbReference type="ChEBI" id="CHEBI:37563"/>
        <note>allosteric inhibitor</note>
    </ligand>
</feature>
<feature type="binding site" evidence="1">
    <location>
        <begin position="188"/>
        <end position="193"/>
    </location>
    <ligand>
        <name>CTP</name>
        <dbReference type="ChEBI" id="CHEBI:37563"/>
        <note>allosteric inhibitor</note>
    </ligand>
</feature>
<feature type="binding site" evidence="1">
    <location>
        <begin position="188"/>
        <end position="193"/>
    </location>
    <ligand>
        <name>UTP</name>
        <dbReference type="ChEBI" id="CHEBI:46398"/>
    </ligand>
</feature>
<feature type="binding site" evidence="1">
    <location>
        <position position="224"/>
    </location>
    <ligand>
        <name>CTP</name>
        <dbReference type="ChEBI" id="CHEBI:37563"/>
        <note>allosteric inhibitor</note>
    </ligand>
</feature>
<feature type="binding site" evidence="1">
    <location>
        <position position="224"/>
    </location>
    <ligand>
        <name>UTP</name>
        <dbReference type="ChEBI" id="CHEBI:46398"/>
    </ligand>
</feature>
<feature type="binding site" evidence="1">
    <location>
        <begin position="240"/>
        <end position="242"/>
    </location>
    <ligand>
        <name>ATP</name>
        <dbReference type="ChEBI" id="CHEBI:30616"/>
    </ligand>
</feature>
<feature type="binding site" evidence="1">
    <location>
        <position position="354"/>
    </location>
    <ligand>
        <name>L-glutamine</name>
        <dbReference type="ChEBI" id="CHEBI:58359"/>
    </ligand>
</feature>
<feature type="binding site" evidence="1">
    <location>
        <begin position="382"/>
        <end position="385"/>
    </location>
    <ligand>
        <name>L-glutamine</name>
        <dbReference type="ChEBI" id="CHEBI:58359"/>
    </ligand>
</feature>
<feature type="binding site" evidence="1">
    <location>
        <position position="405"/>
    </location>
    <ligand>
        <name>L-glutamine</name>
        <dbReference type="ChEBI" id="CHEBI:58359"/>
    </ligand>
</feature>
<feature type="binding site" evidence="1">
    <location>
        <position position="463"/>
    </location>
    <ligand>
        <name>L-glutamine</name>
        <dbReference type="ChEBI" id="CHEBI:58359"/>
    </ligand>
</feature>
<sequence length="534" mass="59507">MTKYIFVTGGVVSSIGKGIVAASLGRLLKNRGLKVTIQKFDPYINIDPGTMSPYQHGEVYVTDDGAETDLDLGHYERFIDINLNKYSNVTTGKIYSEVLRKERKGEYLGATVQVIPHITDALKEKIKRAASTTDSDVIITEVGGTVGDIESLPFLEALRQMKADVGSENVMYIHTTLLPYLKAAGEMKTKPTQHSVKELRGLGIQPNMLVIRTEEPVEQGIKNKLAQFCDVNSEAVIESRDVEHLYQIPLNLQAQSMDQIVCDHLKLNAPQADMTEWSAMVDKVMNLRKTTKIALVGKYVELPDAYLSVVEALKHSGYANDTAIDLKWVNANDVTVDNAADLLGDADGIIVPGGFGQRGTEGKIQAIRYARENDVPMLGICLGMQLTCVEFARHVLNMEGANSFELEPSTKYPIIDIMRDQIDIEDMGGTLRLGLYPCKLKPGSKAAMAYNNQEVVQRRHRHRYEFNNKFRPEFEAAGFVFSGVSPDNRLVEIVELKEKKFFVAAQYHPELQSRPNRPEELYTAFVTAAIKNSN</sequence>
<reference key="1">
    <citation type="journal article" date="2004" name="J. Infect. Dis.">
        <title>Progress toward characterization of the group A Streptococcus metagenome: complete genome sequence of a macrolide-resistant serotype M6 strain.</title>
        <authorList>
            <person name="Banks D.J."/>
            <person name="Porcella S.F."/>
            <person name="Barbian K.D."/>
            <person name="Beres S.B."/>
            <person name="Philips L.E."/>
            <person name="Voyich J.M."/>
            <person name="DeLeo F.R."/>
            <person name="Martin J.M."/>
            <person name="Somerville G.A."/>
            <person name="Musser J.M."/>
        </authorList>
    </citation>
    <scope>NUCLEOTIDE SEQUENCE [LARGE SCALE GENOMIC DNA]</scope>
    <source>
        <strain>ATCC BAA-946 / MGAS10394</strain>
    </source>
</reference>
<protein>
    <recommendedName>
        <fullName evidence="1">CTP synthase</fullName>
        <ecNumber evidence="1">6.3.4.2</ecNumber>
    </recommendedName>
    <alternativeName>
        <fullName evidence="1">Cytidine 5'-triphosphate synthase</fullName>
    </alternativeName>
    <alternativeName>
        <fullName evidence="1">Cytidine triphosphate synthetase</fullName>
        <shortName evidence="1">CTP synthetase</shortName>
        <shortName evidence="1">CTPS</shortName>
    </alternativeName>
    <alternativeName>
        <fullName evidence="1">UTP--ammonia ligase</fullName>
    </alternativeName>
</protein>
<comment type="function">
    <text evidence="1">Catalyzes the ATP-dependent amination of UTP to CTP with either L-glutamine or ammonia as the source of nitrogen. Regulates intracellular CTP levels through interactions with the four ribonucleotide triphosphates.</text>
</comment>
<comment type="catalytic activity">
    <reaction evidence="1">
        <text>UTP + L-glutamine + ATP + H2O = CTP + L-glutamate + ADP + phosphate + 2 H(+)</text>
        <dbReference type="Rhea" id="RHEA:26426"/>
        <dbReference type="ChEBI" id="CHEBI:15377"/>
        <dbReference type="ChEBI" id="CHEBI:15378"/>
        <dbReference type="ChEBI" id="CHEBI:29985"/>
        <dbReference type="ChEBI" id="CHEBI:30616"/>
        <dbReference type="ChEBI" id="CHEBI:37563"/>
        <dbReference type="ChEBI" id="CHEBI:43474"/>
        <dbReference type="ChEBI" id="CHEBI:46398"/>
        <dbReference type="ChEBI" id="CHEBI:58359"/>
        <dbReference type="ChEBI" id="CHEBI:456216"/>
        <dbReference type="EC" id="6.3.4.2"/>
    </reaction>
</comment>
<comment type="catalytic activity">
    <reaction evidence="1">
        <text>L-glutamine + H2O = L-glutamate + NH4(+)</text>
        <dbReference type="Rhea" id="RHEA:15889"/>
        <dbReference type="ChEBI" id="CHEBI:15377"/>
        <dbReference type="ChEBI" id="CHEBI:28938"/>
        <dbReference type="ChEBI" id="CHEBI:29985"/>
        <dbReference type="ChEBI" id="CHEBI:58359"/>
    </reaction>
</comment>
<comment type="catalytic activity">
    <reaction evidence="1">
        <text>UTP + NH4(+) + ATP = CTP + ADP + phosphate + 2 H(+)</text>
        <dbReference type="Rhea" id="RHEA:16597"/>
        <dbReference type="ChEBI" id="CHEBI:15378"/>
        <dbReference type="ChEBI" id="CHEBI:28938"/>
        <dbReference type="ChEBI" id="CHEBI:30616"/>
        <dbReference type="ChEBI" id="CHEBI:37563"/>
        <dbReference type="ChEBI" id="CHEBI:43474"/>
        <dbReference type="ChEBI" id="CHEBI:46398"/>
        <dbReference type="ChEBI" id="CHEBI:456216"/>
    </reaction>
</comment>
<comment type="activity regulation">
    <text evidence="1">Allosterically activated by GTP, when glutamine is the substrate; GTP has no effect on the reaction when ammonia is the substrate. The allosteric effector GTP functions by stabilizing the protein conformation that binds the tetrahedral intermediate(s) formed during glutamine hydrolysis. Inhibited by the product CTP, via allosteric rather than competitive inhibition.</text>
</comment>
<comment type="pathway">
    <text evidence="1">Pyrimidine metabolism; CTP biosynthesis via de novo pathway; CTP from UDP: step 2/2.</text>
</comment>
<comment type="subunit">
    <text evidence="1">Homotetramer.</text>
</comment>
<comment type="miscellaneous">
    <text evidence="1">CTPSs have evolved a hybrid strategy for distinguishing between UTP and CTP. The overlapping regions of the product feedback inhibitory and substrate sites recognize a common feature in both compounds, the triphosphate moiety. To differentiate isosteric substrate and product pyrimidine rings, an additional pocket far from the expected kinase/ligase catalytic site, specifically recognizes the cytosine and ribose portions of the product inhibitor.</text>
</comment>
<comment type="similarity">
    <text evidence="1">Belongs to the CTP synthase family.</text>
</comment>
<dbReference type="EC" id="6.3.4.2" evidence="1"/>
<dbReference type="EMBL" id="CP000003">
    <property type="protein sequence ID" value="AAT87753.1"/>
    <property type="molecule type" value="Genomic_DNA"/>
</dbReference>
<dbReference type="RefSeq" id="WP_002988149.1">
    <property type="nucleotide sequence ID" value="NC_006086.1"/>
</dbReference>
<dbReference type="SMR" id="Q5XA10"/>
<dbReference type="KEGG" id="spa:M6_Spy1618"/>
<dbReference type="HOGENOM" id="CLU_011675_5_0_9"/>
<dbReference type="UniPathway" id="UPA00159">
    <property type="reaction ID" value="UER00277"/>
</dbReference>
<dbReference type="Proteomes" id="UP000001167">
    <property type="component" value="Chromosome"/>
</dbReference>
<dbReference type="GO" id="GO:0005829">
    <property type="term" value="C:cytosol"/>
    <property type="evidence" value="ECO:0007669"/>
    <property type="project" value="TreeGrafter"/>
</dbReference>
<dbReference type="GO" id="GO:0005524">
    <property type="term" value="F:ATP binding"/>
    <property type="evidence" value="ECO:0007669"/>
    <property type="project" value="UniProtKB-KW"/>
</dbReference>
<dbReference type="GO" id="GO:0003883">
    <property type="term" value="F:CTP synthase activity"/>
    <property type="evidence" value="ECO:0007669"/>
    <property type="project" value="UniProtKB-UniRule"/>
</dbReference>
<dbReference type="GO" id="GO:0004359">
    <property type="term" value="F:glutaminase activity"/>
    <property type="evidence" value="ECO:0007669"/>
    <property type="project" value="RHEA"/>
</dbReference>
<dbReference type="GO" id="GO:0042802">
    <property type="term" value="F:identical protein binding"/>
    <property type="evidence" value="ECO:0007669"/>
    <property type="project" value="TreeGrafter"/>
</dbReference>
<dbReference type="GO" id="GO:0046872">
    <property type="term" value="F:metal ion binding"/>
    <property type="evidence" value="ECO:0007669"/>
    <property type="project" value="UniProtKB-KW"/>
</dbReference>
<dbReference type="GO" id="GO:0044210">
    <property type="term" value="P:'de novo' CTP biosynthetic process"/>
    <property type="evidence" value="ECO:0007669"/>
    <property type="project" value="UniProtKB-UniRule"/>
</dbReference>
<dbReference type="GO" id="GO:0019856">
    <property type="term" value="P:pyrimidine nucleobase biosynthetic process"/>
    <property type="evidence" value="ECO:0007669"/>
    <property type="project" value="TreeGrafter"/>
</dbReference>
<dbReference type="CDD" id="cd03113">
    <property type="entry name" value="CTPS_N"/>
    <property type="match status" value="1"/>
</dbReference>
<dbReference type="CDD" id="cd01746">
    <property type="entry name" value="GATase1_CTP_Synthase"/>
    <property type="match status" value="1"/>
</dbReference>
<dbReference type="FunFam" id="3.40.50.300:FF:000009">
    <property type="entry name" value="CTP synthase"/>
    <property type="match status" value="1"/>
</dbReference>
<dbReference type="FunFam" id="3.40.50.880:FF:000002">
    <property type="entry name" value="CTP synthase"/>
    <property type="match status" value="1"/>
</dbReference>
<dbReference type="Gene3D" id="3.40.50.880">
    <property type="match status" value="1"/>
</dbReference>
<dbReference type="Gene3D" id="3.40.50.300">
    <property type="entry name" value="P-loop containing nucleotide triphosphate hydrolases"/>
    <property type="match status" value="1"/>
</dbReference>
<dbReference type="HAMAP" id="MF_01227">
    <property type="entry name" value="PyrG"/>
    <property type="match status" value="1"/>
</dbReference>
<dbReference type="InterPro" id="IPR029062">
    <property type="entry name" value="Class_I_gatase-like"/>
</dbReference>
<dbReference type="InterPro" id="IPR004468">
    <property type="entry name" value="CTP_synthase"/>
</dbReference>
<dbReference type="InterPro" id="IPR017456">
    <property type="entry name" value="CTP_synthase_N"/>
</dbReference>
<dbReference type="InterPro" id="IPR017926">
    <property type="entry name" value="GATASE"/>
</dbReference>
<dbReference type="InterPro" id="IPR033828">
    <property type="entry name" value="GATase1_CTP_Synthase"/>
</dbReference>
<dbReference type="InterPro" id="IPR027417">
    <property type="entry name" value="P-loop_NTPase"/>
</dbReference>
<dbReference type="NCBIfam" id="NF003792">
    <property type="entry name" value="PRK05380.1"/>
    <property type="match status" value="1"/>
</dbReference>
<dbReference type="NCBIfam" id="TIGR00337">
    <property type="entry name" value="PyrG"/>
    <property type="match status" value="1"/>
</dbReference>
<dbReference type="PANTHER" id="PTHR11550">
    <property type="entry name" value="CTP SYNTHASE"/>
    <property type="match status" value="1"/>
</dbReference>
<dbReference type="PANTHER" id="PTHR11550:SF0">
    <property type="entry name" value="CTP SYNTHASE-RELATED"/>
    <property type="match status" value="1"/>
</dbReference>
<dbReference type="Pfam" id="PF06418">
    <property type="entry name" value="CTP_synth_N"/>
    <property type="match status" value="1"/>
</dbReference>
<dbReference type="Pfam" id="PF00117">
    <property type="entry name" value="GATase"/>
    <property type="match status" value="1"/>
</dbReference>
<dbReference type="SUPFAM" id="SSF52317">
    <property type="entry name" value="Class I glutamine amidotransferase-like"/>
    <property type="match status" value="1"/>
</dbReference>
<dbReference type="SUPFAM" id="SSF52540">
    <property type="entry name" value="P-loop containing nucleoside triphosphate hydrolases"/>
    <property type="match status" value="1"/>
</dbReference>
<dbReference type="PROSITE" id="PS51273">
    <property type="entry name" value="GATASE_TYPE_1"/>
    <property type="match status" value="1"/>
</dbReference>
<gene>
    <name evidence="1" type="primary">pyrG</name>
    <name type="ordered locus">M6_Spy1618</name>
</gene>
<evidence type="ECO:0000255" key="1">
    <source>
        <dbReference type="HAMAP-Rule" id="MF_01227"/>
    </source>
</evidence>
<proteinExistence type="inferred from homology"/>
<keyword id="KW-0067">ATP-binding</keyword>
<keyword id="KW-0315">Glutamine amidotransferase</keyword>
<keyword id="KW-0436">Ligase</keyword>
<keyword id="KW-0460">Magnesium</keyword>
<keyword id="KW-0479">Metal-binding</keyword>
<keyword id="KW-0547">Nucleotide-binding</keyword>
<keyword id="KW-0665">Pyrimidine biosynthesis</keyword>
<name>PYRG_STRP6</name>